<accession>Q4WUD3</accession>
<protein>
    <recommendedName>
        <fullName>Probable Xaa-Pro aminopeptidase P</fullName>
        <shortName>AMPP</shortName>
        <shortName>Aminopeptidase P</shortName>
        <ecNumber>3.4.11.9</ecNumber>
    </recommendedName>
    <alternativeName>
        <fullName>Aminoacylproline aminopeptidase</fullName>
    </alternativeName>
    <alternativeName>
        <fullName>Prolidase</fullName>
    </alternativeName>
</protein>
<name>AMPP1_ASPFU</name>
<proteinExistence type="inferred from homology"/>
<reference key="1">
    <citation type="journal article" date="2005" name="Nature">
        <title>Genomic sequence of the pathogenic and allergenic filamentous fungus Aspergillus fumigatus.</title>
        <authorList>
            <person name="Nierman W.C."/>
            <person name="Pain A."/>
            <person name="Anderson M.J."/>
            <person name="Wortman J.R."/>
            <person name="Kim H.S."/>
            <person name="Arroyo J."/>
            <person name="Berriman M."/>
            <person name="Abe K."/>
            <person name="Archer D.B."/>
            <person name="Bermejo C."/>
            <person name="Bennett J.W."/>
            <person name="Bowyer P."/>
            <person name="Chen D."/>
            <person name="Collins M."/>
            <person name="Coulsen R."/>
            <person name="Davies R."/>
            <person name="Dyer P.S."/>
            <person name="Farman M.L."/>
            <person name="Fedorova N."/>
            <person name="Fedorova N.D."/>
            <person name="Feldblyum T.V."/>
            <person name="Fischer R."/>
            <person name="Fosker N."/>
            <person name="Fraser A."/>
            <person name="Garcia J.L."/>
            <person name="Garcia M.J."/>
            <person name="Goble A."/>
            <person name="Goldman G.H."/>
            <person name="Gomi K."/>
            <person name="Griffith-Jones S."/>
            <person name="Gwilliam R."/>
            <person name="Haas B.J."/>
            <person name="Haas H."/>
            <person name="Harris D.E."/>
            <person name="Horiuchi H."/>
            <person name="Huang J."/>
            <person name="Humphray S."/>
            <person name="Jimenez J."/>
            <person name="Keller N."/>
            <person name="Khouri H."/>
            <person name="Kitamoto K."/>
            <person name="Kobayashi T."/>
            <person name="Konzack S."/>
            <person name="Kulkarni R."/>
            <person name="Kumagai T."/>
            <person name="Lafton A."/>
            <person name="Latge J.-P."/>
            <person name="Li W."/>
            <person name="Lord A."/>
            <person name="Lu C."/>
            <person name="Majoros W.H."/>
            <person name="May G.S."/>
            <person name="Miller B.L."/>
            <person name="Mohamoud Y."/>
            <person name="Molina M."/>
            <person name="Monod M."/>
            <person name="Mouyna I."/>
            <person name="Mulligan S."/>
            <person name="Murphy L.D."/>
            <person name="O'Neil S."/>
            <person name="Paulsen I."/>
            <person name="Penalva M.A."/>
            <person name="Pertea M."/>
            <person name="Price C."/>
            <person name="Pritchard B.L."/>
            <person name="Quail M.A."/>
            <person name="Rabbinowitsch E."/>
            <person name="Rawlins N."/>
            <person name="Rajandream M.A."/>
            <person name="Reichard U."/>
            <person name="Renauld H."/>
            <person name="Robson G.D."/>
            <person name="Rodriguez de Cordoba S."/>
            <person name="Rodriguez-Pena J.M."/>
            <person name="Ronning C.M."/>
            <person name="Rutter S."/>
            <person name="Salzberg S.L."/>
            <person name="Sanchez M."/>
            <person name="Sanchez-Ferrero J.C."/>
            <person name="Saunders D."/>
            <person name="Seeger K."/>
            <person name="Squares R."/>
            <person name="Squares S."/>
            <person name="Takeuchi M."/>
            <person name="Tekaia F."/>
            <person name="Turner G."/>
            <person name="Vazquez de Aldana C.R."/>
            <person name="Weidman J."/>
            <person name="White O."/>
            <person name="Woodward J.R."/>
            <person name="Yu J.-H."/>
            <person name="Fraser C.M."/>
            <person name="Galagan J.E."/>
            <person name="Asai K."/>
            <person name="Machida M."/>
            <person name="Hall N."/>
            <person name="Barrell B.G."/>
            <person name="Denning D.W."/>
        </authorList>
    </citation>
    <scope>NUCLEOTIDE SEQUENCE [LARGE SCALE GENOMIC DNA]</scope>
    <source>
        <strain>ATCC MYA-4609 / CBS 101355 / FGSC A1100 / Af293</strain>
    </source>
</reference>
<feature type="chain" id="PRO_0000411781" description="Probable Xaa-Pro aminopeptidase P">
    <location>
        <begin position="1"/>
        <end position="654"/>
    </location>
</feature>
<feature type="binding site" evidence="1">
    <location>
        <position position="449"/>
    </location>
    <ligand>
        <name>Mn(2+)</name>
        <dbReference type="ChEBI" id="CHEBI:29035"/>
        <label>2</label>
    </ligand>
</feature>
<feature type="binding site" evidence="1">
    <location>
        <position position="460"/>
    </location>
    <ligand>
        <name>Mn(2+)</name>
        <dbReference type="ChEBI" id="CHEBI:29035"/>
        <label>1</label>
    </ligand>
</feature>
<feature type="binding site" evidence="1">
    <location>
        <position position="460"/>
    </location>
    <ligand>
        <name>Mn(2+)</name>
        <dbReference type="ChEBI" id="CHEBI:29035"/>
        <label>2</label>
    </ligand>
</feature>
<feature type="binding site" evidence="1">
    <location>
        <position position="558"/>
    </location>
    <ligand>
        <name>Mn(2+)</name>
        <dbReference type="ChEBI" id="CHEBI:29035"/>
        <label>1</label>
    </ligand>
</feature>
<feature type="binding site" evidence="1">
    <location>
        <position position="572"/>
    </location>
    <ligand>
        <name>Mn(2+)</name>
        <dbReference type="ChEBI" id="CHEBI:29035"/>
        <label>1</label>
    </ligand>
</feature>
<feature type="binding site" evidence="1">
    <location>
        <position position="572"/>
    </location>
    <ligand>
        <name>Mn(2+)</name>
        <dbReference type="ChEBI" id="CHEBI:29035"/>
        <label>2</label>
    </ligand>
</feature>
<evidence type="ECO:0000250" key="1"/>
<evidence type="ECO:0000305" key="2"/>
<sequence>MLGFRSPIRLCKLSALGSTRLLPISRPKLFSTAVARYAADMETVNTTKRLARLRQLMQEHKIDVYIVPSEDSHQSEYIAPCDGRREFISGFSGSAGTAIVSMTKAALSTDGRYFNQASKQLDSNWELLKRGVENVPTWQEWTTEQAQGGKVVGVDPALITASGARSLEETLKRNGSSLVGISQNLVDLVWGKDRPAPPREKVRVHPDKFSGKTFQEKIADLRKELEKKKTAGFVISMLDEIAWLFNLRGSDIPYNPVFFAYAIITPTKAELYIDDDKITPEVVAHLGQDVVIKPYNSIFADAKALSEARRKEAGETASKFLLSNKASWALSLSLGGEEHVEETRSPIADAKAIKNEVELAGMRACHIRDGAALIEYFAWLENELVNKKTVLDEVDAADKLEQIRTKHDLFAGLSFDTISSTGPNGAVIHYKPEKGTCSIIDPDAIYLCDSGAQYLDGTTDVTRTFHFGKPTELEKKAFTLVLKGLIAIDTAVFPKGTSGFALDALARQYLWKEGLDYLHGTGHGVGSYLNVHEGPIGIGTRVQYTEVPIAPGNVISDEPGFYEDGKFGIRIENVIMAREVQTTHKFGDKPWLGFEHVTMAPIGRNLIEPSLLSDLELKWVNDYHAEVWDKTHHFFENDEFTRSWLQRETAPITK</sequence>
<gene>
    <name type="primary">ampp</name>
    <name type="ORF">AFUA_5G08050</name>
</gene>
<comment type="function">
    <text evidence="1">Catalyzes the removal of a penultimate prolyl residue from the N-termini of peptides.</text>
</comment>
<comment type="catalytic activity">
    <reaction>
        <text>Release of any N-terminal amino acid, including proline, that is linked to proline, even from a dipeptide or tripeptide.</text>
        <dbReference type="EC" id="3.4.11.9"/>
    </reaction>
</comment>
<comment type="cofactor">
    <cofactor evidence="1">
        <name>Mn(2+)</name>
        <dbReference type="ChEBI" id="CHEBI:29035"/>
    </cofactor>
    <text evidence="1">Binds 2 manganese ions per subunit.</text>
</comment>
<comment type="similarity">
    <text evidence="2">Belongs to the peptidase M24B family.</text>
</comment>
<keyword id="KW-0031">Aminopeptidase</keyword>
<keyword id="KW-0378">Hydrolase</keyword>
<keyword id="KW-0464">Manganese</keyword>
<keyword id="KW-0479">Metal-binding</keyword>
<keyword id="KW-0482">Metalloprotease</keyword>
<keyword id="KW-0645">Protease</keyword>
<keyword id="KW-1185">Reference proteome</keyword>
<organism>
    <name type="scientific">Aspergillus fumigatus (strain ATCC MYA-4609 / CBS 101355 / FGSC A1100 / Af293)</name>
    <name type="common">Neosartorya fumigata</name>
    <dbReference type="NCBI Taxonomy" id="330879"/>
    <lineage>
        <taxon>Eukaryota</taxon>
        <taxon>Fungi</taxon>
        <taxon>Dikarya</taxon>
        <taxon>Ascomycota</taxon>
        <taxon>Pezizomycotina</taxon>
        <taxon>Eurotiomycetes</taxon>
        <taxon>Eurotiomycetidae</taxon>
        <taxon>Eurotiales</taxon>
        <taxon>Aspergillaceae</taxon>
        <taxon>Aspergillus</taxon>
        <taxon>Aspergillus subgen. Fumigati</taxon>
    </lineage>
</organism>
<dbReference type="EC" id="3.4.11.9"/>
<dbReference type="EMBL" id="AAHF01000003">
    <property type="protein sequence ID" value="EAL91793.1"/>
    <property type="molecule type" value="Genomic_DNA"/>
</dbReference>
<dbReference type="RefSeq" id="XP_753831.1">
    <property type="nucleotide sequence ID" value="XM_748738.1"/>
</dbReference>
<dbReference type="SMR" id="Q4WUD3"/>
<dbReference type="FunCoup" id="Q4WUD3">
    <property type="interactions" value="375"/>
</dbReference>
<dbReference type="STRING" id="330879.Q4WUD3"/>
<dbReference type="MEROPS" id="M24.009"/>
<dbReference type="EnsemblFungi" id="EAL91793">
    <property type="protein sequence ID" value="EAL91793"/>
    <property type="gene ID" value="AFUA_5G08050"/>
</dbReference>
<dbReference type="GeneID" id="3511166"/>
<dbReference type="KEGG" id="afm:AFUA_5G08050"/>
<dbReference type="VEuPathDB" id="FungiDB:Afu5g08050"/>
<dbReference type="eggNOG" id="KOG2413">
    <property type="taxonomic scope" value="Eukaryota"/>
</dbReference>
<dbReference type="HOGENOM" id="CLU_011781_2_2_1"/>
<dbReference type="InParanoid" id="Q4WUD3"/>
<dbReference type="OMA" id="EPGMILS"/>
<dbReference type="OrthoDB" id="9995434at2759"/>
<dbReference type="Proteomes" id="UP000002530">
    <property type="component" value="Chromosome 5"/>
</dbReference>
<dbReference type="GO" id="GO:0005737">
    <property type="term" value="C:cytoplasm"/>
    <property type="evidence" value="ECO:0007669"/>
    <property type="project" value="UniProtKB-ARBA"/>
</dbReference>
<dbReference type="GO" id="GO:0046872">
    <property type="term" value="F:metal ion binding"/>
    <property type="evidence" value="ECO:0007669"/>
    <property type="project" value="UniProtKB-KW"/>
</dbReference>
<dbReference type="GO" id="GO:0070006">
    <property type="term" value="F:metalloaminopeptidase activity"/>
    <property type="evidence" value="ECO:0007669"/>
    <property type="project" value="InterPro"/>
</dbReference>
<dbReference type="GO" id="GO:0006508">
    <property type="term" value="P:proteolysis"/>
    <property type="evidence" value="ECO:0007669"/>
    <property type="project" value="UniProtKB-KW"/>
</dbReference>
<dbReference type="CDD" id="cd01085">
    <property type="entry name" value="APP"/>
    <property type="match status" value="1"/>
</dbReference>
<dbReference type="FunFam" id="3.40.350.10:FF:000010">
    <property type="entry name" value="Probable Xaa-Pro aminopeptidase P"/>
    <property type="match status" value="1"/>
</dbReference>
<dbReference type="FunFam" id="3.90.230.10:FF:000007">
    <property type="entry name" value="Xaa-Pro aminopeptidase P"/>
    <property type="match status" value="1"/>
</dbReference>
<dbReference type="FunFam" id="3.40.350.10:FF:000003">
    <property type="entry name" value="Xaa-pro aminopeptidase P"/>
    <property type="match status" value="1"/>
</dbReference>
<dbReference type="Gene3D" id="3.90.230.10">
    <property type="entry name" value="Creatinase/methionine aminopeptidase superfamily"/>
    <property type="match status" value="1"/>
</dbReference>
<dbReference type="Gene3D" id="3.40.350.10">
    <property type="entry name" value="Creatinase/prolidase N-terminal domain"/>
    <property type="match status" value="2"/>
</dbReference>
<dbReference type="InterPro" id="IPR029149">
    <property type="entry name" value="Creatin/AminoP/Spt16_N"/>
</dbReference>
<dbReference type="InterPro" id="IPR036005">
    <property type="entry name" value="Creatinase/aminopeptidase-like"/>
</dbReference>
<dbReference type="InterPro" id="IPR000587">
    <property type="entry name" value="Creatinase_N"/>
</dbReference>
<dbReference type="InterPro" id="IPR000994">
    <property type="entry name" value="Pept_M24"/>
</dbReference>
<dbReference type="InterPro" id="IPR033740">
    <property type="entry name" value="Pept_M24B"/>
</dbReference>
<dbReference type="InterPro" id="IPR032416">
    <property type="entry name" value="Peptidase_M24_C"/>
</dbReference>
<dbReference type="InterPro" id="IPR001131">
    <property type="entry name" value="Peptidase_M24B_aminopep-P_CS"/>
</dbReference>
<dbReference type="InterPro" id="IPR050422">
    <property type="entry name" value="X-Pro_aminopeptidase_P"/>
</dbReference>
<dbReference type="PANTHER" id="PTHR43763">
    <property type="entry name" value="XAA-PRO AMINOPEPTIDASE 1"/>
    <property type="match status" value="1"/>
</dbReference>
<dbReference type="PANTHER" id="PTHR43763:SF6">
    <property type="entry name" value="XAA-PRO AMINOPEPTIDASE 1"/>
    <property type="match status" value="1"/>
</dbReference>
<dbReference type="Pfam" id="PF01321">
    <property type="entry name" value="Creatinase_N"/>
    <property type="match status" value="1"/>
</dbReference>
<dbReference type="Pfam" id="PF16189">
    <property type="entry name" value="Creatinase_N_2"/>
    <property type="match status" value="1"/>
</dbReference>
<dbReference type="Pfam" id="PF00557">
    <property type="entry name" value="Peptidase_M24"/>
    <property type="match status" value="1"/>
</dbReference>
<dbReference type="Pfam" id="PF16188">
    <property type="entry name" value="Peptidase_M24_C"/>
    <property type="match status" value="1"/>
</dbReference>
<dbReference type="SUPFAM" id="SSF55920">
    <property type="entry name" value="Creatinase/aminopeptidase"/>
    <property type="match status" value="1"/>
</dbReference>
<dbReference type="SUPFAM" id="SSF53092">
    <property type="entry name" value="Creatinase/prolidase N-terminal domain"/>
    <property type="match status" value="1"/>
</dbReference>
<dbReference type="PROSITE" id="PS00491">
    <property type="entry name" value="PROLINE_PEPTIDASE"/>
    <property type="match status" value="1"/>
</dbReference>